<accession>A5I4I7</accession>
<accession>A7G5N8</accession>
<feature type="chain" id="PRO_0000329596" description="Polyribonucleotide nucleotidyltransferase">
    <location>
        <begin position="1"/>
        <end position="702"/>
    </location>
</feature>
<feature type="domain" description="KH" evidence="1">
    <location>
        <begin position="552"/>
        <end position="612"/>
    </location>
</feature>
<feature type="domain" description="S1 motif" evidence="1">
    <location>
        <begin position="622"/>
        <end position="690"/>
    </location>
</feature>
<feature type="binding site" evidence="1">
    <location>
        <position position="485"/>
    </location>
    <ligand>
        <name>Mg(2+)</name>
        <dbReference type="ChEBI" id="CHEBI:18420"/>
    </ligand>
</feature>
<feature type="binding site" evidence="1">
    <location>
        <position position="491"/>
    </location>
    <ligand>
        <name>Mg(2+)</name>
        <dbReference type="ChEBI" id="CHEBI:18420"/>
    </ligand>
</feature>
<protein>
    <recommendedName>
        <fullName evidence="1">Polyribonucleotide nucleotidyltransferase</fullName>
        <ecNumber evidence="1">2.7.7.8</ecNumber>
    </recommendedName>
    <alternativeName>
        <fullName evidence="1">Polynucleotide phosphorylase</fullName>
        <shortName evidence="1">PNPase</shortName>
    </alternativeName>
</protein>
<organism>
    <name type="scientific">Clostridium botulinum (strain Hall / ATCC 3502 / NCTC 13319 / Type A)</name>
    <dbReference type="NCBI Taxonomy" id="441771"/>
    <lineage>
        <taxon>Bacteria</taxon>
        <taxon>Bacillati</taxon>
        <taxon>Bacillota</taxon>
        <taxon>Clostridia</taxon>
        <taxon>Eubacteriales</taxon>
        <taxon>Clostridiaceae</taxon>
        <taxon>Clostridium</taxon>
    </lineage>
</organism>
<name>PNP_CLOBH</name>
<evidence type="ECO:0000255" key="1">
    <source>
        <dbReference type="HAMAP-Rule" id="MF_01595"/>
    </source>
</evidence>
<keyword id="KW-0963">Cytoplasm</keyword>
<keyword id="KW-0460">Magnesium</keyword>
<keyword id="KW-0479">Metal-binding</keyword>
<keyword id="KW-0548">Nucleotidyltransferase</keyword>
<keyword id="KW-1185">Reference proteome</keyword>
<keyword id="KW-0694">RNA-binding</keyword>
<keyword id="KW-0808">Transferase</keyword>
<reference key="1">
    <citation type="journal article" date="2007" name="Genome Res.">
        <title>Genome sequence of a proteolytic (Group I) Clostridium botulinum strain Hall A and comparative analysis of the clostridial genomes.</title>
        <authorList>
            <person name="Sebaihia M."/>
            <person name="Peck M.W."/>
            <person name="Minton N.P."/>
            <person name="Thomson N.R."/>
            <person name="Holden M.T.G."/>
            <person name="Mitchell W.J."/>
            <person name="Carter A.T."/>
            <person name="Bentley S.D."/>
            <person name="Mason D.R."/>
            <person name="Crossman L."/>
            <person name="Paul C.J."/>
            <person name="Ivens A."/>
            <person name="Wells-Bennik M.H.J."/>
            <person name="Davis I.J."/>
            <person name="Cerdeno-Tarraga A.M."/>
            <person name="Churcher C."/>
            <person name="Quail M.A."/>
            <person name="Chillingworth T."/>
            <person name="Feltwell T."/>
            <person name="Fraser A."/>
            <person name="Goodhead I."/>
            <person name="Hance Z."/>
            <person name="Jagels K."/>
            <person name="Larke N."/>
            <person name="Maddison M."/>
            <person name="Moule S."/>
            <person name="Mungall K."/>
            <person name="Norbertczak H."/>
            <person name="Rabbinowitsch E."/>
            <person name="Sanders M."/>
            <person name="Simmonds M."/>
            <person name="White B."/>
            <person name="Whithead S."/>
            <person name="Parkhill J."/>
        </authorList>
    </citation>
    <scope>NUCLEOTIDE SEQUENCE [LARGE SCALE GENOMIC DNA]</scope>
    <source>
        <strain>Hall / ATCC 3502 / NCTC 13319 / Type A</strain>
    </source>
</reference>
<reference key="2">
    <citation type="journal article" date="2007" name="PLoS ONE">
        <title>Analysis of the neurotoxin complex genes in Clostridium botulinum A1-A4 and B1 strains: BoNT/A3, /Ba4 and /B1 clusters are located within plasmids.</title>
        <authorList>
            <person name="Smith T.J."/>
            <person name="Hill K.K."/>
            <person name="Foley B.T."/>
            <person name="Detter J.C."/>
            <person name="Munk A.C."/>
            <person name="Bruce D.C."/>
            <person name="Doggett N.A."/>
            <person name="Smith L.A."/>
            <person name="Marks J.D."/>
            <person name="Xie G."/>
            <person name="Brettin T.S."/>
        </authorList>
    </citation>
    <scope>NUCLEOTIDE SEQUENCE [LARGE SCALE GENOMIC DNA]</scope>
    <source>
        <strain>Hall / ATCC 3502 / NCTC 13319 / Type A</strain>
    </source>
</reference>
<comment type="function">
    <text evidence="1">Involved in mRNA degradation. Catalyzes the phosphorolysis of single-stranded polyribonucleotides processively in the 3'- to 5'-direction.</text>
</comment>
<comment type="catalytic activity">
    <reaction evidence="1">
        <text>RNA(n+1) + phosphate = RNA(n) + a ribonucleoside 5'-diphosphate</text>
        <dbReference type="Rhea" id="RHEA:22096"/>
        <dbReference type="Rhea" id="RHEA-COMP:14527"/>
        <dbReference type="Rhea" id="RHEA-COMP:17342"/>
        <dbReference type="ChEBI" id="CHEBI:43474"/>
        <dbReference type="ChEBI" id="CHEBI:57930"/>
        <dbReference type="ChEBI" id="CHEBI:140395"/>
        <dbReference type="EC" id="2.7.7.8"/>
    </reaction>
</comment>
<comment type="cofactor">
    <cofactor evidence="1">
        <name>Mg(2+)</name>
        <dbReference type="ChEBI" id="CHEBI:18420"/>
    </cofactor>
</comment>
<comment type="subcellular location">
    <subcellularLocation>
        <location evidence="1">Cytoplasm</location>
    </subcellularLocation>
</comment>
<comment type="similarity">
    <text evidence="1">Belongs to the polyribonucleotide nucleotidyltransferase family.</text>
</comment>
<gene>
    <name evidence="1" type="primary">pnp</name>
    <name type="ordered locus">CBO2413</name>
    <name type="ordered locus">CLC_2259</name>
</gene>
<sequence length="702" mass="77454">MIHTLETTVAGRKMKVDFGKTGMLSNAAIFMSYGDTVVMINANASKEPREGIDFFPLSVEYEERLYSVGKIPGGFIKREGKPSDKSILHARSIDRPLRPLFPKGYRNDVQIVNTVLSVEQDNLPEILAINGSSLALCLSSIPFTTPVAAVSVGLVDGEFIINPTVAQRENTILDLTVCATKERVMMVEAGGQEIDEETMYSAIMFGFEECKNIVAFQEEAVAKFGKTKNEPVLYKADEEVEKEVKSFAFDMIKEAMYIMDKDERNAQLDKVKEKISEEFSEKYEDKVADIAEVIYKTQKEIVRNMLLNEDRRPDGRAFDEVRPISCEVGILPRTHGTGLFTRGLTQVMTVATLGALGDVQILDGIAEEESKRYMHHYNFPSYSVGEVRPLRGPGRREIGHGALAERALEPLIPSQSEFPYTIRLVSEVLSSNGSTSQASVCGSTLALLDAGVPIKRPAAGIAMGLITSEDLEKEKVITDIQGIEDFFGDMDFKVAGTEKGITSIQFDTKIKGLSNSCVKDALEGAKKARLHILGKIKECIPEPRKELSKYAPRTEIICIDPEKIRDVIGAGGKVINKIIADTNVKIEIKEDGKIFVTSNNEPEGVKKAISIIEGLTKEVVQGEIYLGKVTKTTNFGAFVEILPGKEGLVHISKLDFARVEKVEDVVSVGDEILVKVTDIDNQGRINLSRKDAIAKKEEEKDK</sequence>
<dbReference type="EC" id="2.7.7.8" evidence="1"/>
<dbReference type="EMBL" id="CP000727">
    <property type="protein sequence ID" value="ABS36368.1"/>
    <property type="molecule type" value="Genomic_DNA"/>
</dbReference>
<dbReference type="EMBL" id="AM412317">
    <property type="protein sequence ID" value="CAL83959.1"/>
    <property type="molecule type" value="Genomic_DNA"/>
</dbReference>
<dbReference type="RefSeq" id="WP_011986787.1">
    <property type="nucleotide sequence ID" value="NC_009698.1"/>
</dbReference>
<dbReference type="RefSeq" id="YP_001254908.1">
    <property type="nucleotide sequence ID" value="NC_009495.1"/>
</dbReference>
<dbReference type="RefSeq" id="YP_001388103.1">
    <property type="nucleotide sequence ID" value="NC_009698.1"/>
</dbReference>
<dbReference type="SMR" id="A5I4I7"/>
<dbReference type="GeneID" id="5186668"/>
<dbReference type="KEGG" id="cbh:CLC_2259"/>
<dbReference type="KEGG" id="cbo:CBO2413"/>
<dbReference type="PATRIC" id="fig|413999.7.peg.2389"/>
<dbReference type="HOGENOM" id="CLU_004217_2_2_9"/>
<dbReference type="PRO" id="PR:A5I4I7"/>
<dbReference type="Proteomes" id="UP000001986">
    <property type="component" value="Chromosome"/>
</dbReference>
<dbReference type="GO" id="GO:0005829">
    <property type="term" value="C:cytosol"/>
    <property type="evidence" value="ECO:0000318"/>
    <property type="project" value="GO_Central"/>
</dbReference>
<dbReference type="GO" id="GO:0000175">
    <property type="term" value="F:3'-5'-RNA exonuclease activity"/>
    <property type="evidence" value="ECO:0000318"/>
    <property type="project" value="GO_Central"/>
</dbReference>
<dbReference type="GO" id="GO:0000287">
    <property type="term" value="F:magnesium ion binding"/>
    <property type="evidence" value="ECO:0007669"/>
    <property type="project" value="UniProtKB-UniRule"/>
</dbReference>
<dbReference type="GO" id="GO:0004654">
    <property type="term" value="F:polyribonucleotide nucleotidyltransferase activity"/>
    <property type="evidence" value="ECO:0000318"/>
    <property type="project" value="GO_Central"/>
</dbReference>
<dbReference type="GO" id="GO:0003723">
    <property type="term" value="F:RNA binding"/>
    <property type="evidence" value="ECO:0007669"/>
    <property type="project" value="UniProtKB-UniRule"/>
</dbReference>
<dbReference type="GO" id="GO:0006402">
    <property type="term" value="P:mRNA catabolic process"/>
    <property type="evidence" value="ECO:0007669"/>
    <property type="project" value="UniProtKB-UniRule"/>
</dbReference>
<dbReference type="GO" id="GO:0006401">
    <property type="term" value="P:RNA catabolic process"/>
    <property type="evidence" value="ECO:0000318"/>
    <property type="project" value="GO_Central"/>
</dbReference>
<dbReference type="GO" id="GO:0006396">
    <property type="term" value="P:RNA processing"/>
    <property type="evidence" value="ECO:0007669"/>
    <property type="project" value="InterPro"/>
</dbReference>
<dbReference type="CDD" id="cd02393">
    <property type="entry name" value="KH-I_PNPase"/>
    <property type="match status" value="1"/>
</dbReference>
<dbReference type="CDD" id="cd11363">
    <property type="entry name" value="RNase_PH_PNPase_1"/>
    <property type="match status" value="1"/>
</dbReference>
<dbReference type="CDD" id="cd11364">
    <property type="entry name" value="RNase_PH_PNPase_2"/>
    <property type="match status" value="1"/>
</dbReference>
<dbReference type="CDD" id="cd04472">
    <property type="entry name" value="S1_PNPase"/>
    <property type="match status" value="1"/>
</dbReference>
<dbReference type="FunFam" id="2.40.50.140:FF:000023">
    <property type="entry name" value="Polyribonucleotide nucleotidyltransferase"/>
    <property type="match status" value="1"/>
</dbReference>
<dbReference type="FunFam" id="3.30.1370.10:FF:000001">
    <property type="entry name" value="Polyribonucleotide nucleotidyltransferase"/>
    <property type="match status" value="1"/>
</dbReference>
<dbReference type="FunFam" id="3.30.230.70:FF:000001">
    <property type="entry name" value="Polyribonucleotide nucleotidyltransferase"/>
    <property type="match status" value="1"/>
</dbReference>
<dbReference type="FunFam" id="3.30.230.70:FF:000037">
    <property type="entry name" value="Polyribonucleotide nucleotidyltransferase"/>
    <property type="match status" value="1"/>
</dbReference>
<dbReference type="Gene3D" id="3.30.230.70">
    <property type="entry name" value="GHMP Kinase, N-terminal domain"/>
    <property type="match status" value="2"/>
</dbReference>
<dbReference type="Gene3D" id="3.30.1370.10">
    <property type="entry name" value="K Homology domain, type 1"/>
    <property type="match status" value="1"/>
</dbReference>
<dbReference type="Gene3D" id="2.40.50.140">
    <property type="entry name" value="Nucleic acid-binding proteins"/>
    <property type="match status" value="1"/>
</dbReference>
<dbReference type="HAMAP" id="MF_01595">
    <property type="entry name" value="PNPase"/>
    <property type="match status" value="1"/>
</dbReference>
<dbReference type="InterPro" id="IPR001247">
    <property type="entry name" value="ExoRNase_PH_dom1"/>
</dbReference>
<dbReference type="InterPro" id="IPR015847">
    <property type="entry name" value="ExoRNase_PH_dom2"/>
</dbReference>
<dbReference type="InterPro" id="IPR036345">
    <property type="entry name" value="ExoRNase_PH_dom2_sf"/>
</dbReference>
<dbReference type="InterPro" id="IPR004087">
    <property type="entry name" value="KH_dom"/>
</dbReference>
<dbReference type="InterPro" id="IPR004088">
    <property type="entry name" value="KH_dom_type_1"/>
</dbReference>
<dbReference type="InterPro" id="IPR036612">
    <property type="entry name" value="KH_dom_type_1_sf"/>
</dbReference>
<dbReference type="InterPro" id="IPR012340">
    <property type="entry name" value="NA-bd_OB-fold"/>
</dbReference>
<dbReference type="InterPro" id="IPR012162">
    <property type="entry name" value="PNPase"/>
</dbReference>
<dbReference type="InterPro" id="IPR027408">
    <property type="entry name" value="PNPase/RNase_PH_dom_sf"/>
</dbReference>
<dbReference type="InterPro" id="IPR015848">
    <property type="entry name" value="PNPase_PH_RNA-bd_bac/org-type"/>
</dbReference>
<dbReference type="InterPro" id="IPR036456">
    <property type="entry name" value="PNPase_PH_RNA-bd_sf"/>
</dbReference>
<dbReference type="InterPro" id="IPR020568">
    <property type="entry name" value="Ribosomal_Su5_D2-typ_SF"/>
</dbReference>
<dbReference type="InterPro" id="IPR003029">
    <property type="entry name" value="S1_domain"/>
</dbReference>
<dbReference type="NCBIfam" id="TIGR03591">
    <property type="entry name" value="polynuc_phos"/>
    <property type="match status" value="1"/>
</dbReference>
<dbReference type="NCBIfam" id="NF008805">
    <property type="entry name" value="PRK11824.1"/>
    <property type="match status" value="1"/>
</dbReference>
<dbReference type="PANTHER" id="PTHR11252">
    <property type="entry name" value="POLYRIBONUCLEOTIDE NUCLEOTIDYLTRANSFERASE"/>
    <property type="match status" value="1"/>
</dbReference>
<dbReference type="PANTHER" id="PTHR11252:SF0">
    <property type="entry name" value="POLYRIBONUCLEOTIDE NUCLEOTIDYLTRANSFERASE 1, MITOCHONDRIAL"/>
    <property type="match status" value="1"/>
</dbReference>
<dbReference type="Pfam" id="PF00013">
    <property type="entry name" value="KH_1"/>
    <property type="match status" value="1"/>
</dbReference>
<dbReference type="Pfam" id="PF03726">
    <property type="entry name" value="PNPase"/>
    <property type="match status" value="1"/>
</dbReference>
<dbReference type="Pfam" id="PF01138">
    <property type="entry name" value="RNase_PH"/>
    <property type="match status" value="2"/>
</dbReference>
<dbReference type="Pfam" id="PF03725">
    <property type="entry name" value="RNase_PH_C"/>
    <property type="match status" value="1"/>
</dbReference>
<dbReference type="Pfam" id="PF00575">
    <property type="entry name" value="S1"/>
    <property type="match status" value="1"/>
</dbReference>
<dbReference type="PIRSF" id="PIRSF005499">
    <property type="entry name" value="PNPase"/>
    <property type="match status" value="1"/>
</dbReference>
<dbReference type="SMART" id="SM00322">
    <property type="entry name" value="KH"/>
    <property type="match status" value="1"/>
</dbReference>
<dbReference type="SMART" id="SM00316">
    <property type="entry name" value="S1"/>
    <property type="match status" value="1"/>
</dbReference>
<dbReference type="SUPFAM" id="SSF54791">
    <property type="entry name" value="Eukaryotic type KH-domain (KH-domain type I)"/>
    <property type="match status" value="1"/>
</dbReference>
<dbReference type="SUPFAM" id="SSF50249">
    <property type="entry name" value="Nucleic acid-binding proteins"/>
    <property type="match status" value="1"/>
</dbReference>
<dbReference type="SUPFAM" id="SSF46915">
    <property type="entry name" value="Polynucleotide phosphorylase/guanosine pentaphosphate synthase (PNPase/GPSI), domain 3"/>
    <property type="match status" value="1"/>
</dbReference>
<dbReference type="SUPFAM" id="SSF55666">
    <property type="entry name" value="Ribonuclease PH domain 2-like"/>
    <property type="match status" value="2"/>
</dbReference>
<dbReference type="SUPFAM" id="SSF54211">
    <property type="entry name" value="Ribosomal protein S5 domain 2-like"/>
    <property type="match status" value="2"/>
</dbReference>
<dbReference type="PROSITE" id="PS50084">
    <property type="entry name" value="KH_TYPE_1"/>
    <property type="match status" value="1"/>
</dbReference>
<dbReference type="PROSITE" id="PS50126">
    <property type="entry name" value="S1"/>
    <property type="match status" value="1"/>
</dbReference>
<proteinExistence type="inferred from homology"/>